<evidence type="ECO:0000255" key="1">
    <source>
        <dbReference type="HAMAP-Rule" id="MF_00015"/>
    </source>
</evidence>
<dbReference type="EC" id="3.4.21.88" evidence="1"/>
<dbReference type="EMBL" id="CP001638">
    <property type="protein sequence ID" value="ACS24089.1"/>
    <property type="molecule type" value="Genomic_DNA"/>
</dbReference>
<dbReference type="SMR" id="C5D9K3"/>
<dbReference type="STRING" id="471223.GWCH70_1236"/>
<dbReference type="MEROPS" id="S24.001"/>
<dbReference type="KEGG" id="gwc:GWCH70_1236"/>
<dbReference type="eggNOG" id="COG1974">
    <property type="taxonomic scope" value="Bacteria"/>
</dbReference>
<dbReference type="HOGENOM" id="CLU_066192_45_1_9"/>
<dbReference type="OrthoDB" id="9802364at2"/>
<dbReference type="GO" id="GO:0003677">
    <property type="term" value="F:DNA binding"/>
    <property type="evidence" value="ECO:0007669"/>
    <property type="project" value="UniProtKB-UniRule"/>
</dbReference>
<dbReference type="GO" id="GO:0004252">
    <property type="term" value="F:serine-type endopeptidase activity"/>
    <property type="evidence" value="ECO:0007669"/>
    <property type="project" value="UniProtKB-UniRule"/>
</dbReference>
<dbReference type="GO" id="GO:0006281">
    <property type="term" value="P:DNA repair"/>
    <property type="evidence" value="ECO:0007669"/>
    <property type="project" value="UniProtKB-UniRule"/>
</dbReference>
<dbReference type="GO" id="GO:0006260">
    <property type="term" value="P:DNA replication"/>
    <property type="evidence" value="ECO:0007669"/>
    <property type="project" value="UniProtKB-UniRule"/>
</dbReference>
<dbReference type="GO" id="GO:0045892">
    <property type="term" value="P:negative regulation of DNA-templated transcription"/>
    <property type="evidence" value="ECO:0007669"/>
    <property type="project" value="UniProtKB-UniRule"/>
</dbReference>
<dbReference type="GO" id="GO:0006508">
    <property type="term" value="P:proteolysis"/>
    <property type="evidence" value="ECO:0007669"/>
    <property type="project" value="InterPro"/>
</dbReference>
<dbReference type="GO" id="GO:0009432">
    <property type="term" value="P:SOS response"/>
    <property type="evidence" value="ECO:0007669"/>
    <property type="project" value="UniProtKB-UniRule"/>
</dbReference>
<dbReference type="CDD" id="cd00090">
    <property type="entry name" value="HTH_ARSR"/>
    <property type="match status" value="1"/>
</dbReference>
<dbReference type="CDD" id="cd06529">
    <property type="entry name" value="S24_LexA-like"/>
    <property type="match status" value="1"/>
</dbReference>
<dbReference type="FunFam" id="1.10.10.10:FF:000009">
    <property type="entry name" value="LexA repressor"/>
    <property type="match status" value="1"/>
</dbReference>
<dbReference type="FunFam" id="2.10.109.10:FF:000001">
    <property type="entry name" value="LexA repressor"/>
    <property type="match status" value="1"/>
</dbReference>
<dbReference type="Gene3D" id="2.10.109.10">
    <property type="entry name" value="Umud Fragment, subunit A"/>
    <property type="match status" value="1"/>
</dbReference>
<dbReference type="Gene3D" id="1.10.10.10">
    <property type="entry name" value="Winged helix-like DNA-binding domain superfamily/Winged helix DNA-binding domain"/>
    <property type="match status" value="1"/>
</dbReference>
<dbReference type="HAMAP" id="MF_00015">
    <property type="entry name" value="LexA"/>
    <property type="match status" value="1"/>
</dbReference>
<dbReference type="InterPro" id="IPR011991">
    <property type="entry name" value="ArsR-like_HTH"/>
</dbReference>
<dbReference type="InterPro" id="IPR006200">
    <property type="entry name" value="LexA"/>
</dbReference>
<dbReference type="InterPro" id="IPR039418">
    <property type="entry name" value="LexA-like"/>
</dbReference>
<dbReference type="InterPro" id="IPR036286">
    <property type="entry name" value="LexA/Signal_pep-like_sf"/>
</dbReference>
<dbReference type="InterPro" id="IPR006199">
    <property type="entry name" value="LexA_DNA-bd_dom"/>
</dbReference>
<dbReference type="InterPro" id="IPR050077">
    <property type="entry name" value="LexA_repressor"/>
</dbReference>
<dbReference type="InterPro" id="IPR006197">
    <property type="entry name" value="Peptidase_S24_LexA"/>
</dbReference>
<dbReference type="InterPro" id="IPR015927">
    <property type="entry name" value="Peptidase_S24_S26A/B/C"/>
</dbReference>
<dbReference type="InterPro" id="IPR036388">
    <property type="entry name" value="WH-like_DNA-bd_sf"/>
</dbReference>
<dbReference type="InterPro" id="IPR036390">
    <property type="entry name" value="WH_DNA-bd_sf"/>
</dbReference>
<dbReference type="NCBIfam" id="TIGR00498">
    <property type="entry name" value="lexA"/>
    <property type="match status" value="1"/>
</dbReference>
<dbReference type="PANTHER" id="PTHR33516">
    <property type="entry name" value="LEXA REPRESSOR"/>
    <property type="match status" value="1"/>
</dbReference>
<dbReference type="PANTHER" id="PTHR33516:SF2">
    <property type="entry name" value="LEXA REPRESSOR-RELATED"/>
    <property type="match status" value="1"/>
</dbReference>
<dbReference type="Pfam" id="PF01726">
    <property type="entry name" value="LexA_DNA_bind"/>
    <property type="match status" value="1"/>
</dbReference>
<dbReference type="Pfam" id="PF00717">
    <property type="entry name" value="Peptidase_S24"/>
    <property type="match status" value="1"/>
</dbReference>
<dbReference type="PRINTS" id="PR00726">
    <property type="entry name" value="LEXASERPTASE"/>
</dbReference>
<dbReference type="SUPFAM" id="SSF51306">
    <property type="entry name" value="LexA/Signal peptidase"/>
    <property type="match status" value="1"/>
</dbReference>
<dbReference type="SUPFAM" id="SSF46785">
    <property type="entry name" value="Winged helix' DNA-binding domain"/>
    <property type="match status" value="1"/>
</dbReference>
<gene>
    <name evidence="1" type="primary">lexA</name>
    <name type="ordered locus">GWCH70_1236</name>
</gene>
<protein>
    <recommendedName>
        <fullName evidence="1">LexA repressor</fullName>
        <ecNumber evidence="1">3.4.21.88</ecNumber>
    </recommendedName>
</protein>
<sequence length="207" mass="23086">MTKLSKRQQQILDFIKKEVKTKGYPPSVREIGEAVGLASSSTVHGHLARLESKGYIRRDPTKPRAIEILDADFSASNQTDDVISVPIIGKVTAGQPITAIENIEDYFPLPKRLVSSEDHVFMLEVMGDSMIEAGILDGDYVIVRQQQSADNGDIVVAMTEDNEATVKRFFKEKDHIRLQPENSNLEPIIVRDCTILGKVIGVYRVIH</sequence>
<comment type="function">
    <text evidence="1">Represses a number of genes involved in the response to DNA damage (SOS response), including recA and lexA. In the presence of single-stranded DNA, RecA interacts with LexA causing an autocatalytic cleavage which disrupts the DNA-binding part of LexA, leading to derepression of the SOS regulon and eventually DNA repair.</text>
</comment>
<comment type="catalytic activity">
    <reaction evidence="1">
        <text>Hydrolysis of Ala-|-Gly bond in repressor LexA.</text>
        <dbReference type="EC" id="3.4.21.88"/>
    </reaction>
</comment>
<comment type="subunit">
    <text evidence="1">Homodimer.</text>
</comment>
<comment type="similarity">
    <text evidence="1">Belongs to the peptidase S24 family.</text>
</comment>
<organism>
    <name type="scientific">Geobacillus sp. (strain WCH70)</name>
    <dbReference type="NCBI Taxonomy" id="471223"/>
    <lineage>
        <taxon>Bacteria</taxon>
        <taxon>Bacillati</taxon>
        <taxon>Bacillota</taxon>
        <taxon>Bacilli</taxon>
        <taxon>Bacillales</taxon>
        <taxon>Anoxybacillaceae</taxon>
        <taxon>Geobacillus</taxon>
    </lineage>
</organism>
<keyword id="KW-0068">Autocatalytic cleavage</keyword>
<keyword id="KW-0227">DNA damage</keyword>
<keyword id="KW-0234">DNA repair</keyword>
<keyword id="KW-0235">DNA replication</keyword>
<keyword id="KW-0238">DNA-binding</keyword>
<keyword id="KW-0378">Hydrolase</keyword>
<keyword id="KW-0678">Repressor</keyword>
<keyword id="KW-0742">SOS response</keyword>
<keyword id="KW-0804">Transcription</keyword>
<keyword id="KW-0805">Transcription regulation</keyword>
<feature type="chain" id="PRO_1000201823" description="LexA repressor">
    <location>
        <begin position="1"/>
        <end position="207"/>
    </location>
</feature>
<feature type="DNA-binding region" description="H-T-H motif" evidence="1">
    <location>
        <begin position="28"/>
        <end position="48"/>
    </location>
</feature>
<feature type="active site" description="For autocatalytic cleavage activity" evidence="1">
    <location>
        <position position="129"/>
    </location>
</feature>
<feature type="active site" description="For autocatalytic cleavage activity" evidence="1">
    <location>
        <position position="167"/>
    </location>
</feature>
<feature type="site" description="Cleavage; by autolysis" evidence="1">
    <location>
        <begin position="93"/>
        <end position="94"/>
    </location>
</feature>
<accession>C5D9K3</accession>
<reference key="1">
    <citation type="submission" date="2009-06" db="EMBL/GenBank/DDBJ databases">
        <title>Complete sequence of chromosome of Geopacillus sp. WCH70.</title>
        <authorList>
            <consortium name="US DOE Joint Genome Institute"/>
            <person name="Lucas S."/>
            <person name="Copeland A."/>
            <person name="Lapidus A."/>
            <person name="Glavina del Rio T."/>
            <person name="Dalin E."/>
            <person name="Tice H."/>
            <person name="Bruce D."/>
            <person name="Goodwin L."/>
            <person name="Pitluck S."/>
            <person name="Chertkov O."/>
            <person name="Brettin T."/>
            <person name="Detter J.C."/>
            <person name="Han C."/>
            <person name="Larimer F."/>
            <person name="Land M."/>
            <person name="Hauser L."/>
            <person name="Kyrpides N."/>
            <person name="Mikhailova N."/>
            <person name="Brumm P."/>
            <person name="Mead D.A."/>
            <person name="Richardson P."/>
        </authorList>
    </citation>
    <scope>NUCLEOTIDE SEQUENCE [LARGE SCALE GENOMIC DNA]</scope>
    <source>
        <strain>WCH70</strain>
    </source>
</reference>
<name>LEXA_GEOSW</name>
<proteinExistence type="inferred from homology"/>